<feature type="transit peptide" description="Mitochondrion" evidence="2">
    <location>
        <begin position="1"/>
        <end position="96"/>
    </location>
</feature>
<feature type="chain" id="PRO_0000277809" description="Transmembrane protein 160" evidence="2">
    <location>
        <begin position="97"/>
        <end position="188"/>
    </location>
</feature>
<feature type="transmembrane region" description="Helical" evidence="2">
    <location>
        <begin position="102"/>
        <end position="122"/>
    </location>
</feature>
<feature type="transmembrane region" description="Helical" evidence="2">
    <location>
        <begin position="135"/>
        <end position="155"/>
    </location>
</feature>
<feature type="region of interest" description="Disordered" evidence="3">
    <location>
        <begin position="25"/>
        <end position="52"/>
    </location>
</feature>
<feature type="compositionally biased region" description="Low complexity" evidence="3">
    <location>
        <begin position="29"/>
        <end position="38"/>
    </location>
</feature>
<feature type="modified residue" description="Phosphoserine" evidence="1">
    <location>
        <position position="48"/>
    </location>
</feature>
<keyword id="KW-0472">Membrane</keyword>
<keyword id="KW-0496">Mitochondrion</keyword>
<keyword id="KW-0999">Mitochondrion inner membrane</keyword>
<keyword id="KW-0597">Phosphoprotein</keyword>
<keyword id="KW-1185">Reference proteome</keyword>
<keyword id="KW-0809">Transit peptide</keyword>
<keyword id="KW-0812">Transmembrane</keyword>
<keyword id="KW-1133">Transmembrane helix</keyword>
<reference key="1">
    <citation type="submission" date="2006-02" db="EMBL/GenBank/DDBJ databases">
        <authorList>
            <consortium name="NIH - Mammalian Gene Collection (MGC) project"/>
        </authorList>
    </citation>
    <scope>NUCLEOTIDE SEQUENCE [LARGE SCALE MRNA]</scope>
    <source>
        <strain>Hereford</strain>
        <tissue>Heart ventricle</tissue>
    </source>
</reference>
<sequence>MGGGWWWARAARLARLRFRGALLPPPRPRSGGARGSFAPGHGPRAGASPPPVSELDRADAWLLRKAHETAFLSWFRNGLLASGIGVISFMQSDMGREAAYGFFLLGGLCVVWGGASYVVGLAALRGPMQLSVGGAAAGVGAVLAAGLLWACAVGLYMGQLELDVELVPEDDGTTAAEGPDEAGRPPPE</sequence>
<organism>
    <name type="scientific">Bos taurus</name>
    <name type="common">Bovine</name>
    <dbReference type="NCBI Taxonomy" id="9913"/>
    <lineage>
        <taxon>Eukaryota</taxon>
        <taxon>Metazoa</taxon>
        <taxon>Chordata</taxon>
        <taxon>Craniata</taxon>
        <taxon>Vertebrata</taxon>
        <taxon>Euteleostomi</taxon>
        <taxon>Mammalia</taxon>
        <taxon>Eutheria</taxon>
        <taxon>Laurasiatheria</taxon>
        <taxon>Artiodactyla</taxon>
        <taxon>Ruminantia</taxon>
        <taxon>Pecora</taxon>
        <taxon>Bovidae</taxon>
        <taxon>Bovinae</taxon>
        <taxon>Bos</taxon>
    </lineage>
</organism>
<gene>
    <name evidence="1" type="primary">TMEM160</name>
</gene>
<evidence type="ECO:0000250" key="1">
    <source>
        <dbReference type="UniProtKB" id="Q9NX00"/>
    </source>
</evidence>
<evidence type="ECO:0000255" key="2"/>
<evidence type="ECO:0000256" key="3">
    <source>
        <dbReference type="SAM" id="MobiDB-lite"/>
    </source>
</evidence>
<evidence type="ECO:0000305" key="4"/>
<name>TM160_BOVIN</name>
<comment type="subcellular location">
    <subcellularLocation>
        <location evidence="1">Mitochondrion inner membrane</location>
        <topology evidence="2">Multi-pass membrane protein</topology>
    </subcellularLocation>
</comment>
<comment type="similarity">
    <text evidence="4">Belongs to the TMEM160 family.</text>
</comment>
<protein>
    <recommendedName>
        <fullName evidence="1">Transmembrane protein 160</fullName>
    </recommendedName>
</protein>
<accession>Q24JY6</accession>
<dbReference type="EMBL" id="BC114187">
    <property type="protein sequence ID" value="AAI14188.1"/>
    <property type="molecule type" value="mRNA"/>
</dbReference>
<dbReference type="RefSeq" id="NP_001039484.1">
    <property type="nucleotide sequence ID" value="NM_001046019.2"/>
</dbReference>
<dbReference type="FunCoup" id="Q24JY6">
    <property type="interactions" value="209"/>
</dbReference>
<dbReference type="STRING" id="9913.ENSBTAP00000020695"/>
<dbReference type="PaxDb" id="9913-ENSBTAP00000020695"/>
<dbReference type="Ensembl" id="ENSBTAT00000020695.5">
    <property type="protein sequence ID" value="ENSBTAP00000020695.3"/>
    <property type="gene ID" value="ENSBTAG00000015579.5"/>
</dbReference>
<dbReference type="GeneID" id="508953"/>
<dbReference type="KEGG" id="bta:508953"/>
<dbReference type="CTD" id="54958"/>
<dbReference type="VEuPathDB" id="HostDB:ENSBTAG00000015579"/>
<dbReference type="VGNC" id="VGNC:35985">
    <property type="gene designation" value="TMEM160"/>
</dbReference>
<dbReference type="eggNOG" id="ENOG502S3E7">
    <property type="taxonomic scope" value="Eukaryota"/>
</dbReference>
<dbReference type="GeneTree" id="ENSGT00390000012863"/>
<dbReference type="HOGENOM" id="CLU_110295_0_0_1"/>
<dbReference type="InParanoid" id="Q24JY6"/>
<dbReference type="OMA" id="WWARARL"/>
<dbReference type="OrthoDB" id="9944412at2759"/>
<dbReference type="TreeFam" id="TF338764"/>
<dbReference type="Proteomes" id="UP000009136">
    <property type="component" value="Chromosome 18"/>
</dbReference>
<dbReference type="GO" id="GO:0005743">
    <property type="term" value="C:mitochondrial inner membrane"/>
    <property type="evidence" value="ECO:0000250"/>
    <property type="project" value="UniProtKB"/>
</dbReference>
<dbReference type="InterPro" id="IPR026801">
    <property type="entry name" value="TMEM160"/>
</dbReference>
<dbReference type="PANTHER" id="PTHR16236">
    <property type="entry name" value="TRANSMEMBRANE PROTEIN 160"/>
    <property type="match status" value="1"/>
</dbReference>
<dbReference type="PANTHER" id="PTHR16236:SF0">
    <property type="entry name" value="TRANSMEMBRANE PROTEIN 160"/>
    <property type="match status" value="1"/>
</dbReference>
<proteinExistence type="evidence at transcript level"/>